<reference key="1">
    <citation type="journal article" date="2003" name="J. Bacteriol.">
        <title>Comparative analyses of the complete genome sequences of Pierce's disease and citrus variegated chlorosis strains of Xylella fastidiosa.</title>
        <authorList>
            <person name="Van Sluys M.A."/>
            <person name="de Oliveira M.C."/>
            <person name="Monteiro-Vitorello C.B."/>
            <person name="Miyaki C.Y."/>
            <person name="Furlan L.R."/>
            <person name="Camargo L.E.A."/>
            <person name="da Silva A.C.R."/>
            <person name="Moon D.H."/>
            <person name="Takita M.A."/>
            <person name="Lemos E.G.M."/>
            <person name="Machado M.A."/>
            <person name="Ferro M.I.T."/>
            <person name="da Silva F.R."/>
            <person name="Goldman M.H.S."/>
            <person name="Goldman G.H."/>
            <person name="Lemos M.V.F."/>
            <person name="El-Dorry H."/>
            <person name="Tsai S.M."/>
            <person name="Carrer H."/>
            <person name="Carraro D.M."/>
            <person name="de Oliveira R.C."/>
            <person name="Nunes L.R."/>
            <person name="Siqueira W.J."/>
            <person name="Coutinho L.L."/>
            <person name="Kimura E.T."/>
            <person name="Ferro E.S."/>
            <person name="Harakava R."/>
            <person name="Kuramae E.E."/>
            <person name="Marino C.L."/>
            <person name="Giglioti E."/>
            <person name="Abreu I.L."/>
            <person name="Alves L.M.C."/>
            <person name="do Amaral A.M."/>
            <person name="Baia G.S."/>
            <person name="Blanco S.R."/>
            <person name="Brito M.S."/>
            <person name="Cannavan F.S."/>
            <person name="Celestino A.V."/>
            <person name="da Cunha A.F."/>
            <person name="Fenille R.C."/>
            <person name="Ferro J.A."/>
            <person name="Formighieri E.F."/>
            <person name="Kishi L.T."/>
            <person name="Leoni S.G."/>
            <person name="Oliveira A.R."/>
            <person name="Rosa V.E. Jr."/>
            <person name="Sassaki F.T."/>
            <person name="Sena J.A.D."/>
            <person name="de Souza A.A."/>
            <person name="Truffi D."/>
            <person name="Tsukumo F."/>
            <person name="Yanai G.M."/>
            <person name="Zaros L.G."/>
            <person name="Civerolo E.L."/>
            <person name="Simpson A.J.G."/>
            <person name="Almeida N.F. Jr."/>
            <person name="Setubal J.C."/>
            <person name="Kitajima J.P."/>
        </authorList>
    </citation>
    <scope>NUCLEOTIDE SEQUENCE [LARGE SCALE GENOMIC DNA]</scope>
    <source>
        <strain>Temecula1 / ATCC 700964</strain>
    </source>
</reference>
<evidence type="ECO:0000255" key="1">
    <source>
        <dbReference type="HAMAP-Rule" id="MF_00821"/>
    </source>
</evidence>
<dbReference type="EMBL" id="AE009442">
    <property type="protein sequence ID" value="AAO28923.1"/>
    <property type="molecule type" value="Genomic_DNA"/>
</dbReference>
<dbReference type="RefSeq" id="WP_004084893.1">
    <property type="nucleotide sequence ID" value="NC_004556.1"/>
</dbReference>
<dbReference type="SMR" id="Q87CK2"/>
<dbReference type="GeneID" id="93904849"/>
<dbReference type="KEGG" id="xft:PD_1065"/>
<dbReference type="HOGENOM" id="CLU_111574_1_0_6"/>
<dbReference type="Proteomes" id="UP000002516">
    <property type="component" value="Chromosome"/>
</dbReference>
<dbReference type="GO" id="GO:0005737">
    <property type="term" value="C:cytoplasm"/>
    <property type="evidence" value="ECO:0007669"/>
    <property type="project" value="UniProtKB-SubCell"/>
</dbReference>
<dbReference type="GO" id="GO:0051082">
    <property type="term" value="F:unfolded protein binding"/>
    <property type="evidence" value="ECO:0007669"/>
    <property type="project" value="InterPro"/>
</dbReference>
<dbReference type="GO" id="GO:0006457">
    <property type="term" value="P:protein folding"/>
    <property type="evidence" value="ECO:0007669"/>
    <property type="project" value="UniProtKB-UniRule"/>
</dbReference>
<dbReference type="GO" id="GO:0051262">
    <property type="term" value="P:protein tetramerization"/>
    <property type="evidence" value="ECO:0007669"/>
    <property type="project" value="InterPro"/>
</dbReference>
<dbReference type="GO" id="GO:0015031">
    <property type="term" value="P:protein transport"/>
    <property type="evidence" value="ECO:0007669"/>
    <property type="project" value="UniProtKB-UniRule"/>
</dbReference>
<dbReference type="Gene3D" id="3.10.420.10">
    <property type="entry name" value="SecB-like"/>
    <property type="match status" value="1"/>
</dbReference>
<dbReference type="HAMAP" id="MF_00821">
    <property type="entry name" value="SecB"/>
    <property type="match status" value="1"/>
</dbReference>
<dbReference type="InterPro" id="IPR003708">
    <property type="entry name" value="SecB"/>
</dbReference>
<dbReference type="InterPro" id="IPR035958">
    <property type="entry name" value="SecB-like_sf"/>
</dbReference>
<dbReference type="NCBIfam" id="NF004391">
    <property type="entry name" value="PRK05751.1-2"/>
    <property type="match status" value="1"/>
</dbReference>
<dbReference type="NCBIfam" id="NF004393">
    <property type="entry name" value="PRK05751.1-4"/>
    <property type="match status" value="1"/>
</dbReference>
<dbReference type="NCBIfam" id="TIGR00809">
    <property type="entry name" value="secB"/>
    <property type="match status" value="1"/>
</dbReference>
<dbReference type="PANTHER" id="PTHR36918">
    <property type="match status" value="1"/>
</dbReference>
<dbReference type="PANTHER" id="PTHR36918:SF1">
    <property type="entry name" value="PROTEIN-EXPORT PROTEIN SECB"/>
    <property type="match status" value="1"/>
</dbReference>
<dbReference type="Pfam" id="PF02556">
    <property type="entry name" value="SecB"/>
    <property type="match status" value="1"/>
</dbReference>
<dbReference type="PRINTS" id="PR01594">
    <property type="entry name" value="SECBCHAPRONE"/>
</dbReference>
<dbReference type="SUPFAM" id="SSF54611">
    <property type="entry name" value="SecB-like"/>
    <property type="match status" value="1"/>
</dbReference>
<proteinExistence type="inferred from homology"/>
<organism>
    <name type="scientific">Xylella fastidiosa (strain Temecula1 / ATCC 700964)</name>
    <dbReference type="NCBI Taxonomy" id="183190"/>
    <lineage>
        <taxon>Bacteria</taxon>
        <taxon>Pseudomonadati</taxon>
        <taxon>Pseudomonadota</taxon>
        <taxon>Gammaproteobacteria</taxon>
        <taxon>Lysobacterales</taxon>
        <taxon>Lysobacteraceae</taxon>
        <taxon>Xylella</taxon>
    </lineage>
</organism>
<keyword id="KW-0143">Chaperone</keyword>
<keyword id="KW-0963">Cytoplasm</keyword>
<keyword id="KW-0653">Protein transport</keyword>
<keyword id="KW-1185">Reference proteome</keyword>
<keyword id="KW-0811">Translocation</keyword>
<keyword id="KW-0813">Transport</keyword>
<accession>Q87CK2</accession>
<sequence length="172" mass="18684">MSDEITNGAAKPTEAISGPTFTIEKIYIKDVSFEAPNSPAVFNEAGQPELQLNLNQRVQRLNENAFELVLHVTLTCTAAGKTAYVVEVQQAGVFGLFGLDQHAIGVLLGTQCPNILFPYVRSLVSDLIQIGGFPPFYLQPINFDALYAETLRQRAQNEKEGSQISSQPAGNA</sequence>
<gene>
    <name evidence="1" type="primary">secB</name>
    <name type="ordered locus">PD_1065</name>
</gene>
<protein>
    <recommendedName>
        <fullName evidence="1">Protein-export protein SecB</fullName>
    </recommendedName>
</protein>
<feature type="chain" id="PRO_0000055432" description="Protein-export protein SecB">
    <location>
        <begin position="1"/>
        <end position="172"/>
    </location>
</feature>
<comment type="function">
    <text evidence="1">One of the proteins required for the normal export of preproteins out of the cell cytoplasm. It is a molecular chaperone that binds to a subset of precursor proteins, maintaining them in a translocation-competent state. It also specifically binds to its receptor SecA.</text>
</comment>
<comment type="subunit">
    <text evidence="1">Homotetramer, a dimer of dimers. One homotetramer interacts with 1 SecA dimer.</text>
</comment>
<comment type="subcellular location">
    <subcellularLocation>
        <location evidence="1">Cytoplasm</location>
    </subcellularLocation>
</comment>
<comment type="similarity">
    <text evidence="1">Belongs to the SecB family.</text>
</comment>
<name>SECB_XYLFT</name>